<name>HEMH_TRIEI</name>
<comment type="function">
    <text evidence="1">Catalyzes the ferrous insertion into protoporphyrin IX.</text>
</comment>
<comment type="catalytic activity">
    <reaction evidence="1">
        <text>heme b + 2 H(+) = protoporphyrin IX + Fe(2+)</text>
        <dbReference type="Rhea" id="RHEA:22584"/>
        <dbReference type="ChEBI" id="CHEBI:15378"/>
        <dbReference type="ChEBI" id="CHEBI:29033"/>
        <dbReference type="ChEBI" id="CHEBI:57306"/>
        <dbReference type="ChEBI" id="CHEBI:60344"/>
        <dbReference type="EC" id="4.98.1.1"/>
    </reaction>
</comment>
<comment type="pathway">
    <text evidence="1">Porphyrin-containing compound metabolism; protoheme biosynthesis; protoheme from protoporphyrin-IX: step 1/1.</text>
</comment>
<comment type="subcellular location">
    <subcellularLocation>
        <location evidence="1">Cytoplasm</location>
    </subcellularLocation>
</comment>
<comment type="similarity">
    <text evidence="1">Belongs to the ferrochelatase family.</text>
</comment>
<feature type="chain" id="PRO_1000019382" description="Ferrochelatase">
    <location>
        <begin position="1"/>
        <end position="387"/>
    </location>
</feature>
<feature type="binding site" evidence="1">
    <location>
        <position position="196"/>
    </location>
    <ligand>
        <name>Fe cation</name>
        <dbReference type="ChEBI" id="CHEBI:24875"/>
    </ligand>
</feature>
<feature type="binding site" evidence="1">
    <location>
        <position position="277"/>
    </location>
    <ligand>
        <name>Fe cation</name>
        <dbReference type="ChEBI" id="CHEBI:24875"/>
    </ligand>
</feature>
<evidence type="ECO:0000255" key="1">
    <source>
        <dbReference type="HAMAP-Rule" id="MF_00323"/>
    </source>
</evidence>
<accession>Q10WR6</accession>
<protein>
    <recommendedName>
        <fullName evidence="1">Ferrochelatase</fullName>
        <ecNumber evidence="1">4.98.1.1</ecNumber>
    </recommendedName>
    <alternativeName>
        <fullName evidence="1">Heme synthase</fullName>
    </alternativeName>
    <alternativeName>
        <fullName evidence="1">Protoheme ferro-lyase</fullName>
    </alternativeName>
</protein>
<sequence>MSRVGILLLNLGGPEQLEDVRPFLFNLFSDPEIIRLPFPWLQKPLAWFISTMRFQKSQENYKEIGGGSPLRSITEEQALAIQQQLEQKGLLTQMYIGMRYWHPFTEEALTRIKREQVEKLVILPLYPQYSISTSGSSFRLLDKLWEKDSELKKIEYTVIPSWHQRPGYVQAMVELITQQLDQSPNPDQVHIFFSAHGVPVSYVEEAGDPYQAEIEECVDKIMKTLNCSNPHTLAYQSRVGPVEWLKPYTEDAIEELAAGGVKDLLVVPISFVSEHIETLQEIDIEYRELAEEAGISNFYRVPALNTHPVFINDLADLVMEALDAPSRDFSDAIQMKKIIKMYPQERWQWGLTTTAEVWNGRLAMVGFMALLLELITGYGPLHFAGLL</sequence>
<proteinExistence type="inferred from homology"/>
<reference key="1">
    <citation type="journal article" date="2015" name="Proc. Natl. Acad. Sci. U.S.A.">
        <title>Trichodesmium genome maintains abundant, widespread noncoding DNA in situ, despite oligotrophic lifestyle.</title>
        <authorList>
            <person name="Walworth N."/>
            <person name="Pfreundt U."/>
            <person name="Nelson W.C."/>
            <person name="Mincer T."/>
            <person name="Heidelberg J.F."/>
            <person name="Fu F."/>
            <person name="Waterbury J.B."/>
            <person name="Glavina del Rio T."/>
            <person name="Goodwin L."/>
            <person name="Kyrpides N.C."/>
            <person name="Land M.L."/>
            <person name="Woyke T."/>
            <person name="Hutchins D.A."/>
            <person name="Hess W.R."/>
            <person name="Webb E.A."/>
        </authorList>
    </citation>
    <scope>NUCLEOTIDE SEQUENCE [LARGE SCALE GENOMIC DNA]</scope>
    <source>
        <strain>IMS101</strain>
    </source>
</reference>
<organism>
    <name type="scientific">Trichodesmium erythraeum (strain IMS101)</name>
    <dbReference type="NCBI Taxonomy" id="203124"/>
    <lineage>
        <taxon>Bacteria</taxon>
        <taxon>Bacillati</taxon>
        <taxon>Cyanobacteriota</taxon>
        <taxon>Cyanophyceae</taxon>
        <taxon>Oscillatoriophycideae</taxon>
        <taxon>Oscillatoriales</taxon>
        <taxon>Microcoleaceae</taxon>
        <taxon>Trichodesmium</taxon>
    </lineage>
</organism>
<gene>
    <name evidence="1" type="primary">hemH</name>
    <name type="ordered locus">Tery_4313</name>
</gene>
<dbReference type="EC" id="4.98.1.1" evidence="1"/>
<dbReference type="EMBL" id="CP000393">
    <property type="protein sequence ID" value="ABG53308.1"/>
    <property type="molecule type" value="Genomic_DNA"/>
</dbReference>
<dbReference type="RefSeq" id="WP_011613634.1">
    <property type="nucleotide sequence ID" value="NC_008312.1"/>
</dbReference>
<dbReference type="SMR" id="Q10WR6"/>
<dbReference type="STRING" id="203124.Tery_4313"/>
<dbReference type="KEGG" id="ter:Tery_4313"/>
<dbReference type="eggNOG" id="COG0276">
    <property type="taxonomic scope" value="Bacteria"/>
</dbReference>
<dbReference type="HOGENOM" id="CLU_018884_4_1_3"/>
<dbReference type="OrthoDB" id="9809741at2"/>
<dbReference type="UniPathway" id="UPA00252">
    <property type="reaction ID" value="UER00325"/>
</dbReference>
<dbReference type="GO" id="GO:0005737">
    <property type="term" value="C:cytoplasm"/>
    <property type="evidence" value="ECO:0007669"/>
    <property type="project" value="UniProtKB-SubCell"/>
</dbReference>
<dbReference type="GO" id="GO:0004325">
    <property type="term" value="F:ferrochelatase activity"/>
    <property type="evidence" value="ECO:0007669"/>
    <property type="project" value="UniProtKB-UniRule"/>
</dbReference>
<dbReference type="GO" id="GO:0046872">
    <property type="term" value="F:metal ion binding"/>
    <property type="evidence" value="ECO:0007669"/>
    <property type="project" value="UniProtKB-KW"/>
</dbReference>
<dbReference type="GO" id="GO:0006783">
    <property type="term" value="P:heme biosynthetic process"/>
    <property type="evidence" value="ECO:0007669"/>
    <property type="project" value="UniProtKB-UniRule"/>
</dbReference>
<dbReference type="CDD" id="cd00419">
    <property type="entry name" value="Ferrochelatase_C"/>
    <property type="match status" value="1"/>
</dbReference>
<dbReference type="CDD" id="cd03411">
    <property type="entry name" value="Ferrochelatase_N"/>
    <property type="match status" value="1"/>
</dbReference>
<dbReference type="FunFam" id="3.40.50.1400:FF:000006">
    <property type="entry name" value="Ferrochelatase"/>
    <property type="match status" value="1"/>
</dbReference>
<dbReference type="Gene3D" id="3.40.50.1400">
    <property type="match status" value="2"/>
</dbReference>
<dbReference type="HAMAP" id="MF_00323">
    <property type="entry name" value="Ferrochelatase"/>
    <property type="match status" value="1"/>
</dbReference>
<dbReference type="InterPro" id="IPR001015">
    <property type="entry name" value="Ferrochelatase"/>
</dbReference>
<dbReference type="InterPro" id="IPR019772">
    <property type="entry name" value="Ferrochelatase_AS"/>
</dbReference>
<dbReference type="InterPro" id="IPR033644">
    <property type="entry name" value="Ferrochelatase_C"/>
</dbReference>
<dbReference type="InterPro" id="IPR033659">
    <property type="entry name" value="Ferrochelatase_N"/>
</dbReference>
<dbReference type="NCBIfam" id="TIGR00109">
    <property type="entry name" value="hemH"/>
    <property type="match status" value="1"/>
</dbReference>
<dbReference type="PANTHER" id="PTHR11108">
    <property type="entry name" value="FERROCHELATASE"/>
    <property type="match status" value="1"/>
</dbReference>
<dbReference type="PANTHER" id="PTHR11108:SF1">
    <property type="entry name" value="FERROCHELATASE, MITOCHONDRIAL"/>
    <property type="match status" value="1"/>
</dbReference>
<dbReference type="Pfam" id="PF00762">
    <property type="entry name" value="Ferrochelatase"/>
    <property type="match status" value="1"/>
</dbReference>
<dbReference type="SUPFAM" id="SSF53800">
    <property type="entry name" value="Chelatase"/>
    <property type="match status" value="1"/>
</dbReference>
<dbReference type="SUPFAM" id="SSF103511">
    <property type="entry name" value="Chlorophyll a-b binding protein"/>
    <property type="match status" value="1"/>
</dbReference>
<dbReference type="PROSITE" id="PS00534">
    <property type="entry name" value="FERROCHELATASE"/>
    <property type="match status" value="1"/>
</dbReference>
<keyword id="KW-0963">Cytoplasm</keyword>
<keyword id="KW-0350">Heme biosynthesis</keyword>
<keyword id="KW-0408">Iron</keyword>
<keyword id="KW-0456">Lyase</keyword>
<keyword id="KW-0479">Metal-binding</keyword>
<keyword id="KW-0627">Porphyrin biosynthesis</keyword>